<evidence type="ECO:0000250" key="1"/>
<evidence type="ECO:0000250" key="2">
    <source>
        <dbReference type="UniProtKB" id="P61898"/>
    </source>
</evidence>
<evidence type="ECO:0000250" key="3">
    <source>
        <dbReference type="UniProtKB" id="P61899"/>
    </source>
</evidence>
<evidence type="ECO:0000255" key="4"/>
<evidence type="ECO:0000256" key="5">
    <source>
        <dbReference type="SAM" id="MobiDB-lite"/>
    </source>
</evidence>
<evidence type="ECO:0000305" key="6"/>
<name>NGFV_PSEPO</name>
<accession>Q3HXY4</accession>
<dbReference type="EMBL" id="DQ181911">
    <property type="protein sequence ID" value="ABA60123.1"/>
    <property type="molecule type" value="mRNA"/>
</dbReference>
<dbReference type="SMR" id="Q3HXY4"/>
<dbReference type="GO" id="GO:0030424">
    <property type="term" value="C:axon"/>
    <property type="evidence" value="ECO:0007669"/>
    <property type="project" value="TreeGrafter"/>
</dbReference>
<dbReference type="GO" id="GO:0030425">
    <property type="term" value="C:dendrite"/>
    <property type="evidence" value="ECO:0007669"/>
    <property type="project" value="TreeGrafter"/>
</dbReference>
<dbReference type="GO" id="GO:0005615">
    <property type="term" value="C:extracellular space"/>
    <property type="evidence" value="ECO:0007669"/>
    <property type="project" value="TreeGrafter"/>
</dbReference>
<dbReference type="GO" id="GO:0008021">
    <property type="term" value="C:synaptic vesicle"/>
    <property type="evidence" value="ECO:0007669"/>
    <property type="project" value="TreeGrafter"/>
</dbReference>
<dbReference type="GO" id="GO:0008083">
    <property type="term" value="F:growth factor activity"/>
    <property type="evidence" value="ECO:0007669"/>
    <property type="project" value="UniProtKB-KW"/>
</dbReference>
<dbReference type="GO" id="GO:0008289">
    <property type="term" value="F:lipid binding"/>
    <property type="evidence" value="ECO:0007669"/>
    <property type="project" value="UniProtKB-KW"/>
</dbReference>
<dbReference type="GO" id="GO:0008191">
    <property type="term" value="F:metalloendopeptidase inhibitor activity"/>
    <property type="evidence" value="ECO:0000250"/>
    <property type="project" value="UniProtKB"/>
</dbReference>
<dbReference type="GO" id="GO:0005163">
    <property type="term" value="F:nerve growth factor receptor binding"/>
    <property type="evidence" value="ECO:0007669"/>
    <property type="project" value="TreeGrafter"/>
</dbReference>
<dbReference type="GO" id="GO:0090729">
    <property type="term" value="F:toxin activity"/>
    <property type="evidence" value="ECO:0007669"/>
    <property type="project" value="UniProtKB-KW"/>
</dbReference>
<dbReference type="GO" id="GO:0007169">
    <property type="term" value="P:cell surface receptor protein tyrosine kinase signaling pathway"/>
    <property type="evidence" value="ECO:0007669"/>
    <property type="project" value="TreeGrafter"/>
</dbReference>
<dbReference type="GO" id="GO:0050804">
    <property type="term" value="P:modulation of chemical synaptic transmission"/>
    <property type="evidence" value="ECO:0007669"/>
    <property type="project" value="TreeGrafter"/>
</dbReference>
<dbReference type="GO" id="GO:0043524">
    <property type="term" value="P:negative regulation of neuron apoptotic process"/>
    <property type="evidence" value="ECO:0007669"/>
    <property type="project" value="TreeGrafter"/>
</dbReference>
<dbReference type="GO" id="GO:0021675">
    <property type="term" value="P:nerve development"/>
    <property type="evidence" value="ECO:0007669"/>
    <property type="project" value="TreeGrafter"/>
</dbReference>
<dbReference type="GO" id="GO:0038180">
    <property type="term" value="P:nerve growth factor signaling pathway"/>
    <property type="evidence" value="ECO:0007669"/>
    <property type="project" value="TreeGrafter"/>
</dbReference>
<dbReference type="GO" id="GO:0048812">
    <property type="term" value="P:neuron projection morphogenesis"/>
    <property type="evidence" value="ECO:0007669"/>
    <property type="project" value="TreeGrafter"/>
</dbReference>
<dbReference type="FunFam" id="2.10.90.10:FF:000002">
    <property type="entry name" value="Brain-derived neurotrophic factor"/>
    <property type="match status" value="1"/>
</dbReference>
<dbReference type="Gene3D" id="2.10.90.10">
    <property type="entry name" value="Cystine-knot cytokines"/>
    <property type="match status" value="1"/>
</dbReference>
<dbReference type="InterPro" id="IPR029034">
    <property type="entry name" value="Cystine-knot_cytokine"/>
</dbReference>
<dbReference type="InterPro" id="IPR020408">
    <property type="entry name" value="Nerve_growth_factor-like"/>
</dbReference>
<dbReference type="InterPro" id="IPR002072">
    <property type="entry name" value="Nerve_growth_factor-rel"/>
</dbReference>
<dbReference type="InterPro" id="IPR020425">
    <property type="entry name" value="Nerve_growth_factor_bsu"/>
</dbReference>
<dbReference type="InterPro" id="IPR019846">
    <property type="entry name" value="Nerve_growth_factor_CS"/>
</dbReference>
<dbReference type="InterPro" id="IPR020433">
    <property type="entry name" value="Venom_nerve_growth_factor"/>
</dbReference>
<dbReference type="PANTHER" id="PTHR11589:SF10">
    <property type="entry name" value="BETA-NERVE GROWTH FACTOR"/>
    <property type="match status" value="1"/>
</dbReference>
<dbReference type="PANTHER" id="PTHR11589">
    <property type="entry name" value="NERVE GROWTH FACTOR NGF -RELATED"/>
    <property type="match status" value="1"/>
</dbReference>
<dbReference type="Pfam" id="PF00243">
    <property type="entry name" value="NGF"/>
    <property type="match status" value="1"/>
</dbReference>
<dbReference type="PIRSF" id="PIRSF001789">
    <property type="entry name" value="NGF"/>
    <property type="match status" value="1"/>
</dbReference>
<dbReference type="PRINTS" id="PR00268">
    <property type="entry name" value="NGF"/>
</dbReference>
<dbReference type="PRINTS" id="PR01913">
    <property type="entry name" value="NGFBETA"/>
</dbReference>
<dbReference type="PRINTS" id="PR01917">
    <property type="entry name" value="VENOMNGF"/>
</dbReference>
<dbReference type="SMART" id="SM00140">
    <property type="entry name" value="NGF"/>
    <property type="match status" value="1"/>
</dbReference>
<dbReference type="SUPFAM" id="SSF57501">
    <property type="entry name" value="Cystine-knot cytokines"/>
    <property type="match status" value="1"/>
</dbReference>
<dbReference type="PROSITE" id="PS00248">
    <property type="entry name" value="NGF_1"/>
    <property type="match status" value="1"/>
</dbReference>
<dbReference type="PROSITE" id="PS50270">
    <property type="entry name" value="NGF_2"/>
    <property type="match status" value="1"/>
</dbReference>
<reference key="1">
    <citation type="submission" date="2005-08" db="EMBL/GenBank/DDBJ databases">
        <title>Identification of nerve growth factor as a ubiquitous component of Australian elapid snake venoms.</title>
        <authorList>
            <person name="Earl S.T.H."/>
            <person name="St Pierre L."/>
            <person name="Birrell G.W."/>
            <person name="Wallis T.P."/>
            <person name="Masci P.P."/>
            <person name="de Jersey J."/>
            <person name="Gorman J.J."/>
            <person name="Lavin M.F."/>
        </authorList>
    </citation>
    <scope>NUCLEOTIDE SEQUENCE [MRNA]</scope>
    <source>
        <tissue>Venom gland</tissue>
    </source>
</reference>
<protein>
    <recommendedName>
        <fullName>Venom nerve growth factor</fullName>
        <shortName>v-NGF</shortName>
        <shortName>vNGF</shortName>
    </recommendedName>
</protein>
<comment type="function">
    <text evidence="2 3">Nerve growth factor is important for the development and maintenance of the sympathetic and sensory nervous systems. It stimulates division and differentiation of sympathetic and embryonic sensory neurons as well as basal forebrain cholinergic neurons in the brain. Its relevance in the snake venom is not clear. However, it has been shown to inhibit metalloproteinase-dependent proteolysis of platelet glycoprotein Ib alpha, suggesting a metalloproteinase inhibition to prevent metalloprotease autodigestion and/or protection against prey proteases (By similarity). Binds a lipid between the two protein chains in the homodimer. The lipid-bound form promotes histamine relase from mouse mast cells, contrary to the lipid-free form (By similarity).</text>
</comment>
<comment type="subunit">
    <text evidence="2">Homodimer; non-covalently linked.</text>
</comment>
<comment type="subcellular location">
    <subcellularLocation>
        <location evidence="2">Secreted</location>
    </subcellularLocation>
</comment>
<comment type="tissue specificity">
    <text>Expressed by the venom gland.</text>
</comment>
<comment type="similarity">
    <text evidence="6">Belongs to the NGF-beta family.</text>
</comment>
<proteinExistence type="evidence at transcript level"/>
<organism>
    <name type="scientific">Pseudechis porphyriacus</name>
    <name type="common">Red-bellied black snake</name>
    <dbReference type="NCBI Taxonomy" id="8671"/>
    <lineage>
        <taxon>Eukaryota</taxon>
        <taxon>Metazoa</taxon>
        <taxon>Chordata</taxon>
        <taxon>Craniata</taxon>
        <taxon>Vertebrata</taxon>
        <taxon>Euteleostomi</taxon>
        <taxon>Lepidosauria</taxon>
        <taxon>Squamata</taxon>
        <taxon>Bifurcata</taxon>
        <taxon>Unidentata</taxon>
        <taxon>Episquamata</taxon>
        <taxon>Toxicofera</taxon>
        <taxon>Serpentes</taxon>
        <taxon>Colubroidea</taxon>
        <taxon>Elapidae</taxon>
        <taxon>Hydrophiinae</taxon>
        <taxon>Pseudechis</taxon>
    </lineage>
</organism>
<sequence length="239" mass="26753">MSMLCYTLIIAFLIGIWAAPKSEDNVPLGSPATSDLSDTSCAQTHEGLKTSRNTDQRHPAPKKADDQELGSVANIIVDPKLFQKRQFQSPRVLFSTQPPPLSRDEQSVEFLDNEDALNRNIQAKRQNHPVHDLGEQSVCDSISEWVTKTTATDIKGNTVTVKVDVNLNNQVYKQYFFETKCRNPNPVPSGCRGIDSSHWNSYCTTTQTFVRALTMEGNQASWRFIRIDTACVCVISKKT</sequence>
<keyword id="KW-0165">Cleavage on pair of basic residues</keyword>
<keyword id="KW-1015">Disulfide bond</keyword>
<keyword id="KW-0339">Growth factor</keyword>
<keyword id="KW-0446">Lipid-binding</keyword>
<keyword id="KW-0481">Metalloenzyme inhibitor</keyword>
<keyword id="KW-0483">Metalloprotease inhibitor</keyword>
<keyword id="KW-0646">Protease inhibitor</keyword>
<keyword id="KW-0964">Secreted</keyword>
<keyword id="KW-0732">Signal</keyword>
<keyword id="KW-0800">Toxin</keyword>
<feature type="signal peptide" evidence="4">
    <location>
        <begin position="1"/>
        <end position="18"/>
    </location>
</feature>
<feature type="propeptide" id="PRO_0000043311" evidence="1">
    <location>
        <begin position="19"/>
        <end position="125"/>
    </location>
</feature>
<feature type="chain" id="PRO_0000043312" description="Venom nerve growth factor">
    <location>
        <begin position="126"/>
        <end position="239"/>
    </location>
</feature>
<feature type="region of interest" description="Disordered" evidence="5">
    <location>
        <begin position="47"/>
        <end position="68"/>
    </location>
</feature>
<feature type="compositionally biased region" description="Basic and acidic residues" evidence="5">
    <location>
        <begin position="47"/>
        <end position="66"/>
    </location>
</feature>
<feature type="disulfide bond" evidence="2">
    <location>
        <begin position="139"/>
        <end position="203"/>
    </location>
</feature>
<feature type="disulfide bond" evidence="2">
    <location>
        <begin position="181"/>
        <end position="231"/>
    </location>
</feature>
<feature type="disulfide bond" evidence="2">
    <location>
        <begin position="191"/>
        <end position="233"/>
    </location>
</feature>